<dbReference type="EC" id="5.4.2.7" evidence="1"/>
<dbReference type="EMBL" id="AP007281">
    <property type="protein sequence ID" value="BAG24622.1"/>
    <property type="molecule type" value="Genomic_DNA"/>
</dbReference>
<dbReference type="RefSeq" id="WP_003669679.1">
    <property type="nucleotide sequence ID" value="NC_010609.1"/>
</dbReference>
<dbReference type="SMR" id="B2G590"/>
<dbReference type="KEGG" id="lrf:LAR_0106"/>
<dbReference type="HOGENOM" id="CLU_053861_0_0_9"/>
<dbReference type="UniPathway" id="UPA00002">
    <property type="reaction ID" value="UER00467"/>
</dbReference>
<dbReference type="GO" id="GO:0005829">
    <property type="term" value="C:cytosol"/>
    <property type="evidence" value="ECO:0007669"/>
    <property type="project" value="TreeGrafter"/>
</dbReference>
<dbReference type="GO" id="GO:0000287">
    <property type="term" value="F:magnesium ion binding"/>
    <property type="evidence" value="ECO:0007669"/>
    <property type="project" value="InterPro"/>
</dbReference>
<dbReference type="GO" id="GO:0030145">
    <property type="term" value="F:manganese ion binding"/>
    <property type="evidence" value="ECO:0007669"/>
    <property type="project" value="UniProtKB-UniRule"/>
</dbReference>
<dbReference type="GO" id="GO:0008973">
    <property type="term" value="F:phosphopentomutase activity"/>
    <property type="evidence" value="ECO:0007669"/>
    <property type="project" value="UniProtKB-UniRule"/>
</dbReference>
<dbReference type="GO" id="GO:0006018">
    <property type="term" value="P:2-deoxyribose 1-phosphate catabolic process"/>
    <property type="evidence" value="ECO:0007669"/>
    <property type="project" value="UniProtKB-UniRule"/>
</dbReference>
<dbReference type="GO" id="GO:0006015">
    <property type="term" value="P:5-phosphoribose 1-diphosphate biosynthetic process"/>
    <property type="evidence" value="ECO:0007669"/>
    <property type="project" value="UniProtKB-UniPathway"/>
</dbReference>
<dbReference type="GO" id="GO:0043094">
    <property type="term" value="P:metabolic compound salvage"/>
    <property type="evidence" value="ECO:0007669"/>
    <property type="project" value="InterPro"/>
</dbReference>
<dbReference type="GO" id="GO:0009117">
    <property type="term" value="P:nucleotide metabolic process"/>
    <property type="evidence" value="ECO:0007669"/>
    <property type="project" value="InterPro"/>
</dbReference>
<dbReference type="CDD" id="cd16009">
    <property type="entry name" value="PPM"/>
    <property type="match status" value="1"/>
</dbReference>
<dbReference type="FunFam" id="3.30.70.1250:FF:000001">
    <property type="entry name" value="Phosphopentomutase"/>
    <property type="match status" value="1"/>
</dbReference>
<dbReference type="Gene3D" id="3.40.720.10">
    <property type="entry name" value="Alkaline Phosphatase, subunit A"/>
    <property type="match status" value="1"/>
</dbReference>
<dbReference type="Gene3D" id="3.30.70.1250">
    <property type="entry name" value="Phosphopentomutase"/>
    <property type="match status" value="1"/>
</dbReference>
<dbReference type="HAMAP" id="MF_00740">
    <property type="entry name" value="Phosphopentomut"/>
    <property type="match status" value="1"/>
</dbReference>
<dbReference type="InterPro" id="IPR017850">
    <property type="entry name" value="Alkaline_phosphatase_core_sf"/>
</dbReference>
<dbReference type="InterPro" id="IPR010045">
    <property type="entry name" value="DeoB"/>
</dbReference>
<dbReference type="InterPro" id="IPR006124">
    <property type="entry name" value="Metalloenzyme"/>
</dbReference>
<dbReference type="InterPro" id="IPR024052">
    <property type="entry name" value="Phosphopentomutase_DeoB_cap_sf"/>
</dbReference>
<dbReference type="NCBIfam" id="TIGR01696">
    <property type="entry name" value="deoB"/>
    <property type="match status" value="1"/>
</dbReference>
<dbReference type="NCBIfam" id="NF003766">
    <property type="entry name" value="PRK05362.1"/>
    <property type="match status" value="1"/>
</dbReference>
<dbReference type="PANTHER" id="PTHR21110">
    <property type="entry name" value="PHOSPHOPENTOMUTASE"/>
    <property type="match status" value="1"/>
</dbReference>
<dbReference type="PANTHER" id="PTHR21110:SF0">
    <property type="entry name" value="PHOSPHOPENTOMUTASE"/>
    <property type="match status" value="1"/>
</dbReference>
<dbReference type="Pfam" id="PF01676">
    <property type="entry name" value="Metalloenzyme"/>
    <property type="match status" value="1"/>
</dbReference>
<dbReference type="PIRSF" id="PIRSF001491">
    <property type="entry name" value="Ppentomutase"/>
    <property type="match status" value="1"/>
</dbReference>
<dbReference type="SUPFAM" id="SSF53649">
    <property type="entry name" value="Alkaline phosphatase-like"/>
    <property type="match status" value="1"/>
</dbReference>
<dbReference type="SUPFAM" id="SSF143856">
    <property type="entry name" value="DeoB insert domain-like"/>
    <property type="match status" value="1"/>
</dbReference>
<name>DEOB_LIMRJ</name>
<gene>
    <name evidence="1" type="primary">deoB</name>
    <name type="ordered locus">LAR_0106</name>
</gene>
<sequence>MSYKRVFVIVMDSVGTGAAHDAAKFDDVGSDTLGHVGEYYKGALKLPNLGKLGISNLRDTPIEGVPVADPAIGDYGKMEEISAGKDSMDGHWEMMGLPVMKPLSTFPNGFPQEIVDKLEKFSGRKVIVNKPYSGTEVIHDYGERQMETGELILYTSGDSVMQIAAHEDVIPVEELYKICEYARTLVNGPEYTVGRIIARPYVGPDKDHFTRTANRHDFSLKPIGETDMDRLRAAGYDVIGVGKINDIFSGEGIDKGYHNESNMDGMDHVDEVMKQDFTGFCFTNLVDFDAMYGHRRNPKGFGQALMDFDKRLGNVLDEMKPDDLLMITADHGNDPGFKGTDHTRENVPLLVYSPSMNKPNQSLGVRKTFSDLGATILENFNVEPVKGTSFYKEISND</sequence>
<evidence type="ECO:0000255" key="1">
    <source>
        <dbReference type="HAMAP-Rule" id="MF_00740"/>
    </source>
</evidence>
<comment type="function">
    <text evidence="1">Isomerase that catalyzes the conversion of deoxy-ribose 1-phosphate (dRib-1-P) and ribose 1-phosphate (Rib-1-P) to deoxy-ribose 5-phosphate (dRib-5-P) and ribose 5-phosphate (Rib-5-P), respectively.</text>
</comment>
<comment type="catalytic activity">
    <reaction evidence="1">
        <text>2-deoxy-alpha-D-ribose 1-phosphate = 2-deoxy-D-ribose 5-phosphate</text>
        <dbReference type="Rhea" id="RHEA:27658"/>
        <dbReference type="ChEBI" id="CHEBI:57259"/>
        <dbReference type="ChEBI" id="CHEBI:62877"/>
        <dbReference type="EC" id="5.4.2.7"/>
    </reaction>
</comment>
<comment type="catalytic activity">
    <reaction evidence="1">
        <text>alpha-D-ribose 1-phosphate = D-ribose 5-phosphate</text>
        <dbReference type="Rhea" id="RHEA:18793"/>
        <dbReference type="ChEBI" id="CHEBI:57720"/>
        <dbReference type="ChEBI" id="CHEBI:78346"/>
        <dbReference type="EC" id="5.4.2.7"/>
    </reaction>
</comment>
<comment type="cofactor">
    <cofactor evidence="1">
        <name>Mn(2+)</name>
        <dbReference type="ChEBI" id="CHEBI:29035"/>
    </cofactor>
    <text evidence="1">Binds 2 manganese ions.</text>
</comment>
<comment type="pathway">
    <text evidence="1">Carbohydrate degradation; 2-deoxy-D-ribose 1-phosphate degradation; D-glyceraldehyde 3-phosphate and acetaldehyde from 2-deoxy-alpha-D-ribose 1-phosphate: step 1/2.</text>
</comment>
<comment type="subcellular location">
    <subcellularLocation>
        <location evidence="1">Cytoplasm</location>
    </subcellularLocation>
</comment>
<comment type="similarity">
    <text evidence="1">Belongs to the phosphopentomutase family.</text>
</comment>
<reference key="1">
    <citation type="journal article" date="2008" name="DNA Res.">
        <title>Comparative genome analysis of Lactobacillus reuteri and Lactobacillus fermentum reveal a genomic island for reuterin and cobalamin production.</title>
        <authorList>
            <person name="Morita H."/>
            <person name="Toh H."/>
            <person name="Fukuda S."/>
            <person name="Horikawa H."/>
            <person name="Oshima K."/>
            <person name="Suzuki T."/>
            <person name="Murakami M."/>
            <person name="Hisamatsu S."/>
            <person name="Kato Y."/>
            <person name="Takizawa T."/>
            <person name="Fukuoka H."/>
            <person name="Yoshimura T."/>
            <person name="Itoh K."/>
            <person name="O'Sullivan D.J."/>
            <person name="McKay L.L."/>
            <person name="Ohno H."/>
            <person name="Kikuchi J."/>
            <person name="Masaoka T."/>
            <person name="Hattori M."/>
        </authorList>
    </citation>
    <scope>NUCLEOTIDE SEQUENCE [LARGE SCALE GENOMIC DNA]</scope>
    <source>
        <strain>JCM 1112</strain>
    </source>
</reference>
<accession>B2G590</accession>
<feature type="chain" id="PRO_1000133085" description="Phosphopentomutase">
    <location>
        <begin position="1"/>
        <end position="397"/>
    </location>
</feature>
<feature type="binding site" evidence="1">
    <location>
        <position position="12"/>
    </location>
    <ligand>
        <name>Mn(2+)</name>
        <dbReference type="ChEBI" id="CHEBI:29035"/>
        <label>1</label>
    </ligand>
</feature>
<feature type="binding site" evidence="1">
    <location>
        <position position="289"/>
    </location>
    <ligand>
        <name>Mn(2+)</name>
        <dbReference type="ChEBI" id="CHEBI:29035"/>
        <label>2</label>
    </ligand>
</feature>
<feature type="binding site" evidence="1">
    <location>
        <position position="294"/>
    </location>
    <ligand>
        <name>Mn(2+)</name>
        <dbReference type="ChEBI" id="CHEBI:29035"/>
        <label>2</label>
    </ligand>
</feature>
<feature type="binding site" evidence="1">
    <location>
        <position position="330"/>
    </location>
    <ligand>
        <name>Mn(2+)</name>
        <dbReference type="ChEBI" id="CHEBI:29035"/>
        <label>1</label>
    </ligand>
</feature>
<feature type="binding site" evidence="1">
    <location>
        <position position="331"/>
    </location>
    <ligand>
        <name>Mn(2+)</name>
        <dbReference type="ChEBI" id="CHEBI:29035"/>
        <label>1</label>
    </ligand>
</feature>
<feature type="binding site" evidence="1">
    <location>
        <position position="342"/>
    </location>
    <ligand>
        <name>Mn(2+)</name>
        <dbReference type="ChEBI" id="CHEBI:29035"/>
        <label>2</label>
    </ligand>
</feature>
<keyword id="KW-0963">Cytoplasm</keyword>
<keyword id="KW-0413">Isomerase</keyword>
<keyword id="KW-0464">Manganese</keyword>
<keyword id="KW-0479">Metal-binding</keyword>
<proteinExistence type="inferred from homology"/>
<organism>
    <name type="scientific">Limosilactobacillus reuteri subsp. reuteri (strain JCM 1112)</name>
    <name type="common">Lactobacillus reuteri</name>
    <dbReference type="NCBI Taxonomy" id="557433"/>
    <lineage>
        <taxon>Bacteria</taxon>
        <taxon>Bacillati</taxon>
        <taxon>Bacillota</taxon>
        <taxon>Bacilli</taxon>
        <taxon>Lactobacillales</taxon>
        <taxon>Lactobacillaceae</taxon>
        <taxon>Limosilactobacillus</taxon>
    </lineage>
</organism>
<protein>
    <recommendedName>
        <fullName evidence="1">Phosphopentomutase</fullName>
        <ecNumber evidence="1">5.4.2.7</ecNumber>
    </recommendedName>
    <alternativeName>
        <fullName evidence="1">Phosphodeoxyribomutase</fullName>
    </alternativeName>
</protein>